<protein>
    <recommendedName>
        <fullName evidence="1">Transcriptional repressor NrdR</fullName>
    </recommendedName>
</protein>
<gene>
    <name evidence="1" type="primary">nrdR</name>
    <name type="ordered locus">Geob_2674</name>
</gene>
<comment type="function">
    <text evidence="1">Negatively regulates transcription of bacterial ribonucleotide reductase nrd genes and operons by binding to NrdR-boxes.</text>
</comment>
<comment type="cofactor">
    <cofactor evidence="1">
        <name>Zn(2+)</name>
        <dbReference type="ChEBI" id="CHEBI:29105"/>
    </cofactor>
    <text evidence="1">Binds 1 zinc ion.</text>
</comment>
<comment type="similarity">
    <text evidence="1">Belongs to the NrdR family.</text>
</comment>
<evidence type="ECO:0000255" key="1">
    <source>
        <dbReference type="HAMAP-Rule" id="MF_00440"/>
    </source>
</evidence>
<keyword id="KW-0067">ATP-binding</keyword>
<keyword id="KW-0238">DNA-binding</keyword>
<keyword id="KW-0479">Metal-binding</keyword>
<keyword id="KW-0547">Nucleotide-binding</keyword>
<keyword id="KW-1185">Reference proteome</keyword>
<keyword id="KW-0678">Repressor</keyword>
<keyword id="KW-0804">Transcription</keyword>
<keyword id="KW-0805">Transcription regulation</keyword>
<keyword id="KW-0862">Zinc</keyword>
<keyword id="KW-0863">Zinc-finger</keyword>
<proteinExistence type="inferred from homology"/>
<sequence>MKCPFCAFADSKVVDSRPDKEGSTIRRRRECESCSKRFTTHERVEEILPLVIKKDGRREPFDRMKLVAGVMKACEKRPVSVETIERLIDRLEVQMQESGEKEIPSKSLGEWVMTELHAIDQVAYVRFASVYRSFKDITEFMSELQELLKK</sequence>
<name>NRDR_GEODF</name>
<feature type="chain" id="PRO_1000191798" description="Transcriptional repressor NrdR">
    <location>
        <begin position="1"/>
        <end position="150"/>
    </location>
</feature>
<feature type="domain" description="ATP-cone" evidence="1">
    <location>
        <begin position="49"/>
        <end position="139"/>
    </location>
</feature>
<feature type="zinc finger region" evidence="1">
    <location>
        <begin position="3"/>
        <end position="34"/>
    </location>
</feature>
<dbReference type="EMBL" id="CP001390">
    <property type="protein sequence ID" value="ACM21024.1"/>
    <property type="molecule type" value="Genomic_DNA"/>
</dbReference>
<dbReference type="RefSeq" id="WP_012647752.1">
    <property type="nucleotide sequence ID" value="NC_011979.1"/>
</dbReference>
<dbReference type="SMR" id="B9M1E2"/>
<dbReference type="STRING" id="316067.Geob_2674"/>
<dbReference type="KEGG" id="geo:Geob_2674"/>
<dbReference type="eggNOG" id="COG1327">
    <property type="taxonomic scope" value="Bacteria"/>
</dbReference>
<dbReference type="HOGENOM" id="CLU_108412_0_0_7"/>
<dbReference type="OrthoDB" id="9807461at2"/>
<dbReference type="Proteomes" id="UP000007721">
    <property type="component" value="Chromosome"/>
</dbReference>
<dbReference type="GO" id="GO:0005524">
    <property type="term" value="F:ATP binding"/>
    <property type="evidence" value="ECO:0007669"/>
    <property type="project" value="UniProtKB-KW"/>
</dbReference>
<dbReference type="GO" id="GO:0003677">
    <property type="term" value="F:DNA binding"/>
    <property type="evidence" value="ECO:0007669"/>
    <property type="project" value="UniProtKB-KW"/>
</dbReference>
<dbReference type="GO" id="GO:0008270">
    <property type="term" value="F:zinc ion binding"/>
    <property type="evidence" value="ECO:0007669"/>
    <property type="project" value="UniProtKB-UniRule"/>
</dbReference>
<dbReference type="GO" id="GO:0045892">
    <property type="term" value="P:negative regulation of DNA-templated transcription"/>
    <property type="evidence" value="ECO:0007669"/>
    <property type="project" value="UniProtKB-UniRule"/>
</dbReference>
<dbReference type="HAMAP" id="MF_00440">
    <property type="entry name" value="NrdR"/>
    <property type="match status" value="1"/>
</dbReference>
<dbReference type="InterPro" id="IPR005144">
    <property type="entry name" value="ATP-cone_dom"/>
</dbReference>
<dbReference type="InterPro" id="IPR055173">
    <property type="entry name" value="NrdR-like_N"/>
</dbReference>
<dbReference type="InterPro" id="IPR003796">
    <property type="entry name" value="RNR_NrdR-like"/>
</dbReference>
<dbReference type="NCBIfam" id="TIGR00244">
    <property type="entry name" value="transcriptional regulator NrdR"/>
    <property type="match status" value="1"/>
</dbReference>
<dbReference type="PANTHER" id="PTHR30455">
    <property type="entry name" value="TRANSCRIPTIONAL REPRESSOR NRDR"/>
    <property type="match status" value="1"/>
</dbReference>
<dbReference type="PANTHER" id="PTHR30455:SF2">
    <property type="entry name" value="TRANSCRIPTIONAL REPRESSOR NRDR"/>
    <property type="match status" value="1"/>
</dbReference>
<dbReference type="Pfam" id="PF03477">
    <property type="entry name" value="ATP-cone"/>
    <property type="match status" value="1"/>
</dbReference>
<dbReference type="Pfam" id="PF22811">
    <property type="entry name" value="Zn_ribbon_NrdR"/>
    <property type="match status" value="1"/>
</dbReference>
<dbReference type="PROSITE" id="PS51161">
    <property type="entry name" value="ATP_CONE"/>
    <property type="match status" value="1"/>
</dbReference>
<reference key="1">
    <citation type="submission" date="2009-01" db="EMBL/GenBank/DDBJ databases">
        <title>Complete sequence of Geobacter sp. FRC-32.</title>
        <authorList>
            <consortium name="US DOE Joint Genome Institute"/>
            <person name="Lucas S."/>
            <person name="Copeland A."/>
            <person name="Lapidus A."/>
            <person name="Glavina del Rio T."/>
            <person name="Dalin E."/>
            <person name="Tice H."/>
            <person name="Bruce D."/>
            <person name="Goodwin L."/>
            <person name="Pitluck S."/>
            <person name="Saunders E."/>
            <person name="Brettin T."/>
            <person name="Detter J.C."/>
            <person name="Han C."/>
            <person name="Larimer F."/>
            <person name="Land M."/>
            <person name="Hauser L."/>
            <person name="Kyrpides N."/>
            <person name="Ovchinnikova G."/>
            <person name="Kostka J."/>
            <person name="Richardson P."/>
        </authorList>
    </citation>
    <scope>NUCLEOTIDE SEQUENCE [LARGE SCALE GENOMIC DNA]</scope>
    <source>
        <strain>DSM 22248 / JCM 15807 / FRC-32</strain>
    </source>
</reference>
<accession>B9M1E2</accession>
<organism>
    <name type="scientific">Geotalea daltonii (strain DSM 22248 / JCM 15807 / FRC-32)</name>
    <name type="common">Geobacter daltonii</name>
    <dbReference type="NCBI Taxonomy" id="316067"/>
    <lineage>
        <taxon>Bacteria</taxon>
        <taxon>Pseudomonadati</taxon>
        <taxon>Thermodesulfobacteriota</taxon>
        <taxon>Desulfuromonadia</taxon>
        <taxon>Geobacterales</taxon>
        <taxon>Geobacteraceae</taxon>
        <taxon>Geotalea</taxon>
    </lineage>
</organism>